<organism>
    <name type="scientific">Schizosaccharomyces pombe (strain 972 / ATCC 24843)</name>
    <name type="common">Fission yeast</name>
    <dbReference type="NCBI Taxonomy" id="284812"/>
    <lineage>
        <taxon>Eukaryota</taxon>
        <taxon>Fungi</taxon>
        <taxon>Dikarya</taxon>
        <taxon>Ascomycota</taxon>
        <taxon>Taphrinomycotina</taxon>
        <taxon>Schizosaccharomycetes</taxon>
        <taxon>Schizosaccharomycetales</taxon>
        <taxon>Schizosaccharomycetaceae</taxon>
        <taxon>Schizosaccharomyces</taxon>
    </lineage>
</organism>
<sequence>MDKDIGSAVAELQVCSTHYAMTIVSCGFHSPQSLMNADLQHCLLADQNYLLNNSNKNKGSIIEENTRKPFQSARNLQTSLKTHPESAITRYGLGYAGFGNGWTALKPKILFPSQKRRVKGRFTFPFSRRSNLAQSKLPVDLVPIRLEIDADRYKLRDSFTWNLYDKCISLDQFAEQICIDYDIPLHNVHIVQNISKSIQAQINDYEPRKAQSNLSFVSDVSSSTSETVYAHEPSDSLAKASKQQIPTVQNDLRILIKLDITIGRLNLIDQFEWNLFAPESSAEEFATVMCLDLGLSGEFCTAVAHSIREQCQMYIKYLSLIGYLFDGSEIEDEEVRSYILPPLKNTLRFSDMESSSFAPMIYELNDAEMERQDRGYDREARRMRRRQGRAKHGIMLPDLRDIPKIHRSLFPSSSVPSDDDFMHALSLSTNSDGETLNEINTNNPEREHLIVRLKVDSQKLKIIVEQSQTLTLNNFQQRKLTPLPNSMSFDSLNEFESERNTPSTYGQNISPLPQFSSPSLSSDAFLTNSNSSESALVHMQKLNLPDFTPSWVKRCVIETFAKFPNDRFNVIVKPALNPAERMTVRICCHDCINEYFTAGPGFTFGNFHIHLLSSSHQQKKEVRMNTVLDRNT</sequence>
<reference key="1">
    <citation type="journal article" date="2002" name="Nature">
        <title>The genome sequence of Schizosaccharomyces pombe.</title>
        <authorList>
            <person name="Wood V."/>
            <person name="Gwilliam R."/>
            <person name="Rajandream M.A."/>
            <person name="Lyne M.H."/>
            <person name="Lyne R."/>
            <person name="Stewart A."/>
            <person name="Sgouros J.G."/>
            <person name="Peat N."/>
            <person name="Hayles J."/>
            <person name="Baker S.G."/>
            <person name="Basham D."/>
            <person name="Bowman S."/>
            <person name="Brooks K."/>
            <person name="Brown D."/>
            <person name="Brown S."/>
            <person name="Chillingworth T."/>
            <person name="Churcher C.M."/>
            <person name="Collins M."/>
            <person name="Connor R."/>
            <person name="Cronin A."/>
            <person name="Davis P."/>
            <person name="Feltwell T."/>
            <person name="Fraser A."/>
            <person name="Gentles S."/>
            <person name="Goble A."/>
            <person name="Hamlin N."/>
            <person name="Harris D.E."/>
            <person name="Hidalgo J."/>
            <person name="Hodgson G."/>
            <person name="Holroyd S."/>
            <person name="Hornsby T."/>
            <person name="Howarth S."/>
            <person name="Huckle E.J."/>
            <person name="Hunt S."/>
            <person name="Jagels K."/>
            <person name="James K.D."/>
            <person name="Jones L."/>
            <person name="Jones M."/>
            <person name="Leather S."/>
            <person name="McDonald S."/>
            <person name="McLean J."/>
            <person name="Mooney P."/>
            <person name="Moule S."/>
            <person name="Mungall K.L."/>
            <person name="Murphy L.D."/>
            <person name="Niblett D."/>
            <person name="Odell C."/>
            <person name="Oliver K."/>
            <person name="O'Neil S."/>
            <person name="Pearson D."/>
            <person name="Quail M.A."/>
            <person name="Rabbinowitsch E."/>
            <person name="Rutherford K.M."/>
            <person name="Rutter S."/>
            <person name="Saunders D."/>
            <person name="Seeger K."/>
            <person name="Sharp S."/>
            <person name="Skelton J."/>
            <person name="Simmonds M.N."/>
            <person name="Squares R."/>
            <person name="Squares S."/>
            <person name="Stevens K."/>
            <person name="Taylor K."/>
            <person name="Taylor R.G."/>
            <person name="Tivey A."/>
            <person name="Walsh S.V."/>
            <person name="Warren T."/>
            <person name="Whitehead S."/>
            <person name="Woodward J.R."/>
            <person name="Volckaert G."/>
            <person name="Aert R."/>
            <person name="Robben J."/>
            <person name="Grymonprez B."/>
            <person name="Weltjens I."/>
            <person name="Vanstreels E."/>
            <person name="Rieger M."/>
            <person name="Schaefer M."/>
            <person name="Mueller-Auer S."/>
            <person name="Gabel C."/>
            <person name="Fuchs M."/>
            <person name="Duesterhoeft A."/>
            <person name="Fritzc C."/>
            <person name="Holzer E."/>
            <person name="Moestl D."/>
            <person name="Hilbert H."/>
            <person name="Borzym K."/>
            <person name="Langer I."/>
            <person name="Beck A."/>
            <person name="Lehrach H."/>
            <person name="Reinhardt R."/>
            <person name="Pohl T.M."/>
            <person name="Eger P."/>
            <person name="Zimmermann W."/>
            <person name="Wedler H."/>
            <person name="Wambutt R."/>
            <person name="Purnelle B."/>
            <person name="Goffeau A."/>
            <person name="Cadieu E."/>
            <person name="Dreano S."/>
            <person name="Gloux S."/>
            <person name="Lelaure V."/>
            <person name="Mottier S."/>
            <person name="Galibert F."/>
            <person name="Aves S.J."/>
            <person name="Xiang Z."/>
            <person name="Hunt C."/>
            <person name="Moore K."/>
            <person name="Hurst S.M."/>
            <person name="Lucas M."/>
            <person name="Rochet M."/>
            <person name="Gaillardin C."/>
            <person name="Tallada V.A."/>
            <person name="Garzon A."/>
            <person name="Thode G."/>
            <person name="Daga R.R."/>
            <person name="Cruzado L."/>
            <person name="Jimenez J."/>
            <person name="Sanchez M."/>
            <person name="del Rey F."/>
            <person name="Benito J."/>
            <person name="Dominguez A."/>
            <person name="Revuelta J.L."/>
            <person name="Moreno S."/>
            <person name="Armstrong J."/>
            <person name="Forsburg S.L."/>
            <person name="Cerutti L."/>
            <person name="Lowe T."/>
            <person name="McCombie W.R."/>
            <person name="Paulsen I."/>
            <person name="Potashkin J."/>
            <person name="Shpakovski G.V."/>
            <person name="Ussery D."/>
            <person name="Barrell B.G."/>
            <person name="Nurse P."/>
        </authorList>
    </citation>
    <scope>NUCLEOTIDE SEQUENCE [LARGE SCALE GENOMIC DNA]</scope>
    <source>
        <strain>972 / ATCC 24843</strain>
    </source>
</reference>
<reference key="2">
    <citation type="journal article" date="2008" name="Nat. Struct. Mol. Biol.">
        <title>Fission yeast SWI/SNF and RSC complexes show compositional and functional differences from budding yeast.</title>
        <authorList>
            <person name="Monahan B.J."/>
            <person name="Villen J."/>
            <person name="Marguerat S."/>
            <person name="Baehler J."/>
            <person name="Gygi S.P."/>
            <person name="Winston F."/>
        </authorList>
    </citation>
    <scope>IDENTIFICATION IN THE SWI/SNF COMPLEX</scope>
    <scope>FUNCTION OF THE SWI/SNF COMPLEX</scope>
    <scope>IDENTIFICATION BY MASS SPECTROMETRY</scope>
</reference>
<keyword id="KW-0156">Chromatin regulator</keyword>
<keyword id="KW-0539">Nucleus</keyword>
<keyword id="KW-1185">Reference proteome</keyword>
<keyword id="KW-0804">Transcription</keyword>
<keyword id="KW-0805">Transcription regulation</keyword>
<feature type="chain" id="PRO_0000205963" description="SWI/SNF chromatin-remodeling complex subunit snf5">
    <location>
        <begin position="1"/>
        <end position="632"/>
    </location>
</feature>
<proteinExistence type="evidence at protein level"/>
<name>SNF5_SCHPO</name>
<dbReference type="EMBL" id="CU329670">
    <property type="protein sequence ID" value="CAA90495.1"/>
    <property type="molecule type" value="Genomic_DNA"/>
</dbReference>
<dbReference type="PIR" id="T38556">
    <property type="entry name" value="S58152"/>
</dbReference>
<dbReference type="RefSeq" id="NP_592979.1">
    <property type="nucleotide sequence ID" value="NM_001018379.1"/>
</dbReference>
<dbReference type="SMR" id="Q09699"/>
<dbReference type="BioGRID" id="278292">
    <property type="interactions" value="307"/>
</dbReference>
<dbReference type="ComplexPortal" id="CPX-6362">
    <property type="entry name" value="SWI/SNF chromatin remodelling complex"/>
</dbReference>
<dbReference type="DIP" id="DIP-48379N"/>
<dbReference type="FunCoup" id="Q09699">
    <property type="interactions" value="269"/>
</dbReference>
<dbReference type="IntAct" id="Q09699">
    <property type="interactions" value="11"/>
</dbReference>
<dbReference type="STRING" id="284812.Q09699"/>
<dbReference type="PaxDb" id="4896-SPAC2F7.08c.1"/>
<dbReference type="EnsemblFungi" id="SPAC2F7.08c.1">
    <property type="protein sequence ID" value="SPAC2F7.08c.1:pep"/>
    <property type="gene ID" value="SPAC2F7.08c"/>
</dbReference>
<dbReference type="GeneID" id="2541801"/>
<dbReference type="KEGG" id="spo:2541801"/>
<dbReference type="PomBase" id="SPAC2F7.08c">
    <property type="gene designation" value="snf5"/>
</dbReference>
<dbReference type="VEuPathDB" id="FungiDB:SPAC2F7.08c"/>
<dbReference type="eggNOG" id="KOG1649">
    <property type="taxonomic scope" value="Eukaryota"/>
</dbReference>
<dbReference type="HOGENOM" id="CLU_018784_0_0_1"/>
<dbReference type="InParanoid" id="Q09699"/>
<dbReference type="OMA" id="IDADRYK"/>
<dbReference type="PhylomeDB" id="Q09699"/>
<dbReference type="PRO" id="PR:Q09699"/>
<dbReference type="Proteomes" id="UP000002485">
    <property type="component" value="Chromosome I"/>
</dbReference>
<dbReference type="GO" id="GO:0000785">
    <property type="term" value="C:chromatin"/>
    <property type="evidence" value="ECO:0000303"/>
    <property type="project" value="ComplexPortal"/>
</dbReference>
<dbReference type="GO" id="GO:0000228">
    <property type="term" value="C:nuclear chromosome"/>
    <property type="evidence" value="ECO:0007669"/>
    <property type="project" value="InterPro"/>
</dbReference>
<dbReference type="GO" id="GO:0005634">
    <property type="term" value="C:nucleus"/>
    <property type="evidence" value="ECO:0000318"/>
    <property type="project" value="GO_Central"/>
</dbReference>
<dbReference type="GO" id="GO:0016586">
    <property type="term" value="C:RSC-type complex"/>
    <property type="evidence" value="ECO:0000318"/>
    <property type="project" value="GO_Central"/>
</dbReference>
<dbReference type="GO" id="GO:0016514">
    <property type="term" value="C:SWI/SNF complex"/>
    <property type="evidence" value="ECO:0000314"/>
    <property type="project" value="PomBase"/>
</dbReference>
<dbReference type="GO" id="GO:0003712">
    <property type="term" value="F:transcription coregulator activity"/>
    <property type="evidence" value="ECO:0000318"/>
    <property type="project" value="GO_Central"/>
</dbReference>
<dbReference type="GO" id="GO:0006338">
    <property type="term" value="P:chromatin remodeling"/>
    <property type="evidence" value="ECO:0000318"/>
    <property type="project" value="GO_Central"/>
</dbReference>
<dbReference type="GO" id="GO:0006357">
    <property type="term" value="P:regulation of transcription by RNA polymerase II"/>
    <property type="evidence" value="ECO:0000318"/>
    <property type="project" value="GO_Central"/>
</dbReference>
<dbReference type="GO" id="GO:0045815">
    <property type="term" value="P:transcription initiation-coupled chromatin remodeling"/>
    <property type="evidence" value="ECO:0000305"/>
    <property type="project" value="PomBase"/>
</dbReference>
<dbReference type="InterPro" id="IPR006939">
    <property type="entry name" value="SNF5"/>
</dbReference>
<dbReference type="PANTHER" id="PTHR10019">
    <property type="entry name" value="SNF5"/>
    <property type="match status" value="1"/>
</dbReference>
<dbReference type="Pfam" id="PF04855">
    <property type="entry name" value="SNF5"/>
    <property type="match status" value="1"/>
</dbReference>
<protein>
    <recommendedName>
        <fullName>SWI/SNF chromatin-remodeling complex subunit snf5</fullName>
    </recommendedName>
    <alternativeName>
        <fullName>SWI/SNF complex subunit snf5</fullName>
    </alternativeName>
</protein>
<gene>
    <name type="primary">snf5</name>
    <name type="ORF">SPAC2F7.08c</name>
</gene>
<evidence type="ECO:0000269" key="1">
    <source>
    </source>
</evidence>
<evidence type="ECO:0000305" key="2"/>
<comment type="function">
    <text evidence="1">Component of the SWI/SNF complex, an ATP-dependent chromatin remodeling complex, required for the positive and negative regulation of gene expression of a large number of genes. It changes chromatin structure by altering DNA-histone contacts within a nucleosome, leading eventually to a change in nucleosome position, thus facilitating or repressing binding of gene-specific transcription factors.</text>
</comment>
<comment type="subunit">
    <text evidence="1">Component of the SWI/SNF global transcription activator complex composed of at least arp9, arp42, snf5, snf22, snf30, sbf59, sol1, ssr1, ssr2, ssr3, ssr4 and tfg3.</text>
</comment>
<comment type="subcellular location">
    <subcellularLocation>
        <location evidence="2">Nucleus</location>
    </subcellularLocation>
</comment>
<comment type="similarity">
    <text evidence="2">Belongs to the SNF5 family.</text>
</comment>
<accession>Q09699</accession>